<sequence length="79" mass="8446">MHHQDRDQDQALAAVLAALLLVGGTLIVRELLGLWPAVAVGMAPALALYGGPPAARRIAVAVEVRRFRRHLAHHDRAAG</sequence>
<accession>P22402</accession>
<keyword id="KW-0614">Plasmid</keyword>
<dbReference type="EMBL" id="M21778">
    <property type="status" value="NOT_ANNOTATED_CDS"/>
    <property type="molecule type" value="Genomic_DNA"/>
</dbReference>
<dbReference type="PIR" id="B30924">
    <property type="entry name" value="B30924"/>
</dbReference>
<dbReference type="RefSeq" id="WP_032761119.1">
    <property type="nucleotide sequence ID" value="NC_001387.1"/>
</dbReference>
<feature type="chain" id="PRO_0000066099" description="Uncharacterized 8.4 kDa protein">
    <location>
        <begin position="1"/>
        <end position="79"/>
    </location>
</feature>
<protein>
    <recommendedName>
        <fullName>Uncharacterized 8.4 kDa protein</fullName>
    </recommendedName>
    <alternativeName>
        <fullName>ORF 79</fullName>
    </alternativeName>
</protein>
<reference key="1">
    <citation type="journal article" date="1988" name="J. Bacteriol.">
        <title>Complete nucleotide sequence of the Streptomyces lividans plasmid pIJ101 and correlation of the sequence with genetic properties.</title>
        <authorList>
            <person name="Kendall K.J."/>
            <person name="Cohen S.N."/>
        </authorList>
    </citation>
    <scope>NUCLEOTIDE SEQUENCE [GENOMIC DNA]</scope>
</reference>
<geneLocation type="plasmid">
    <name>pIJ101</name>
</geneLocation>
<organism>
    <name type="scientific">Streptomyces lividans</name>
    <dbReference type="NCBI Taxonomy" id="1916"/>
    <lineage>
        <taxon>Bacteria</taxon>
        <taxon>Bacillati</taxon>
        <taxon>Actinomycetota</taxon>
        <taxon>Actinomycetes</taxon>
        <taxon>Kitasatosporales</taxon>
        <taxon>Streptomycetaceae</taxon>
        <taxon>Streptomyces</taxon>
    </lineage>
</organism>
<proteinExistence type="predicted"/>
<name>Y8KD_STRLI</name>